<organism>
    <name type="scientific">Naja haje haje</name>
    <name type="common">Egyptian cobra</name>
    <dbReference type="NCBI Taxonomy" id="8642"/>
    <lineage>
        <taxon>Eukaryota</taxon>
        <taxon>Metazoa</taxon>
        <taxon>Chordata</taxon>
        <taxon>Craniata</taxon>
        <taxon>Vertebrata</taxon>
        <taxon>Euteleostomi</taxon>
        <taxon>Lepidosauria</taxon>
        <taxon>Squamata</taxon>
        <taxon>Bifurcata</taxon>
        <taxon>Unidentata</taxon>
        <taxon>Episquamata</taxon>
        <taxon>Toxicofera</taxon>
        <taxon>Serpentes</taxon>
        <taxon>Colubroidea</taxon>
        <taxon>Elapidae</taxon>
        <taxon>Elapinae</taxon>
        <taxon>Naja</taxon>
    </lineage>
</organism>
<comment type="subcellular location">
    <subcellularLocation>
        <location evidence="4">Secreted</location>
    </subcellularLocation>
</comment>
<comment type="tissue specificity">
    <text evidence="4">Expressed by the venom gland.</text>
</comment>
<comment type="PTM">
    <text evidence="1">Contains 8 disulfide bonds.</text>
</comment>
<comment type="mass spectrometry" mass="24960.0" method="MALDI" evidence="4"/>
<comment type="miscellaneous">
    <text evidence="4">Not toxic when administered to crickets at doses up to 5 nmol/g.</text>
</comment>
<comment type="similarity">
    <text evidence="2">Belongs to the CRISP family.</text>
</comment>
<sequence length="25" mass="2961">NVDFNSESTRRKKKQKEIVDLXNSL</sequence>
<accession>P84806</accession>
<feature type="chain" id="PRO_0000231636" description="Cysteine-rich venom protein 25">
    <location>
        <begin position="1"/>
        <end position="25" status="greater than"/>
    </location>
</feature>
<feature type="region of interest" description="Disordered" evidence="3">
    <location>
        <begin position="1"/>
        <end position="25"/>
    </location>
</feature>
<feature type="non-terminal residue" evidence="5">
    <location>
        <position position="25"/>
    </location>
</feature>
<reference evidence="6" key="1">
    <citation type="journal article" date="2005" name="Biochem. Biophys. Res. Commun.">
        <title>Cobra venom contains a pool of cysteine-rich secretory proteins.</title>
        <authorList>
            <person name="Osipov A.V."/>
            <person name="Levashov M.Y."/>
            <person name="Tsetlin V.I."/>
            <person name="Utkin Y.N."/>
        </authorList>
    </citation>
    <scope>PROTEIN SEQUENCE</scope>
    <scope>SUBCELLULAR LOCATION</scope>
    <scope>TISSUE SPECIFICITY</scope>
    <scope>MASS SPECTROMETRY</scope>
    <source>
        <tissue evidence="4">Venom</tissue>
    </source>
</reference>
<proteinExistence type="evidence at protein level"/>
<keyword id="KW-0903">Direct protein sequencing</keyword>
<keyword id="KW-1015">Disulfide bond</keyword>
<keyword id="KW-0964">Secreted</keyword>
<keyword id="KW-0800">Toxin</keyword>
<evidence type="ECO:0000250" key="1">
    <source>
        <dbReference type="UniProtKB" id="P84808"/>
    </source>
</evidence>
<evidence type="ECO:0000255" key="2"/>
<evidence type="ECO:0000256" key="3">
    <source>
        <dbReference type="SAM" id="MobiDB-lite"/>
    </source>
</evidence>
<evidence type="ECO:0000269" key="4">
    <source>
    </source>
</evidence>
<evidence type="ECO:0000303" key="5">
    <source>
    </source>
</evidence>
<evidence type="ECO:0000305" key="6"/>
<protein>
    <recommendedName>
        <fullName>Cysteine-rich venom protein 25</fullName>
    </recommendedName>
    <alternativeName>
        <fullName>CRVP-25h</fullName>
    </alternativeName>
</protein>
<dbReference type="GO" id="GO:0005576">
    <property type="term" value="C:extracellular region"/>
    <property type="evidence" value="ECO:0000314"/>
    <property type="project" value="UniProtKB"/>
</dbReference>
<dbReference type="GO" id="GO:0090729">
    <property type="term" value="F:toxin activity"/>
    <property type="evidence" value="ECO:0007669"/>
    <property type="project" value="UniProtKB-KW"/>
</dbReference>
<dbReference type="GO" id="GO:0006952">
    <property type="term" value="P:defense response"/>
    <property type="evidence" value="ECO:0000314"/>
    <property type="project" value="UniProtKB"/>
</dbReference>
<name>CRVPP_NAJHH</name>